<evidence type="ECO:0000255" key="1">
    <source>
        <dbReference type="PROSITE-ProRule" id="PRU00675"/>
    </source>
</evidence>
<evidence type="ECO:0000305" key="2"/>
<protein>
    <recommendedName>
        <fullName>Nitrogen fixation nifHD region GlnB-like protein 1</fullName>
    </recommendedName>
</protein>
<keyword id="KW-0535">Nitrogen fixation</keyword>
<keyword id="KW-0804">Transcription</keyword>
<keyword id="KW-0805">Transcription regulation</keyword>
<sequence length="105" mass="11693">MKMIRAIIRPEKSEEVADALDDAGFPALTKIDVIGRGKQKGIRFDEIYYDEIPKTMMLIVVDDADAERVVLVISESGYTGKIGDGKIFISPVENAYTVRTREEGL</sequence>
<comment type="function">
    <text>Could be involved in the regulation of nitrogen fixation.</text>
</comment>
<comment type="similarity">
    <text evidence="1">Belongs to the P(II) protein family.</text>
</comment>
<reference key="1">
    <citation type="journal article" date="1995" name="Eur. J. Biochem.">
        <title>The tungsten formylmethanofuran dehydrogenase from Methanobacterium thermoautotrophicum contains sequence motifs characteristic for enzymes containing molybdopterin dinucleotide.</title>
        <authorList>
            <person name="Hochheimer A."/>
            <person name="Schmitz R.A."/>
            <person name="Thauer R.K."/>
            <person name="Hedderich R."/>
        </authorList>
    </citation>
    <scope>NUCLEOTIDE SEQUENCE [GENOMIC DNA]</scope>
    <source>
        <strain>ATCC BAA-927 / DSM 2133 / JCM 14651 / NBRC 100331 / OCM 82 / Marburg</strain>
    </source>
</reference>
<reference key="2">
    <citation type="journal article" date="2010" name="J. Bacteriol.">
        <title>Complete genome sequence of Methanothermobacter marburgensis, a methanoarchaeon model organism.</title>
        <authorList>
            <person name="Liesegang H."/>
            <person name="Kaster A.K."/>
            <person name="Wiezer A."/>
            <person name="Goenrich M."/>
            <person name="Wollherr A."/>
            <person name="Seedorf H."/>
            <person name="Gottschalk G."/>
            <person name="Thauer R.K."/>
        </authorList>
    </citation>
    <scope>NUCLEOTIDE SEQUENCE [LARGE SCALE GENOMIC DNA]</scope>
    <source>
        <strain>ATCC BAA-927 / DSM 2133 / JCM 14651 / NBRC 100331 / OCM 82 / Marburg</strain>
    </source>
</reference>
<organism>
    <name type="scientific">Methanothermobacter marburgensis (strain ATCC BAA-927 / DSM 2133 / JCM 14651 / NBRC 100331 / OCM 82 / Marburg)</name>
    <name type="common">Methanobacterium thermoautotrophicum</name>
    <dbReference type="NCBI Taxonomy" id="79929"/>
    <lineage>
        <taxon>Archaea</taxon>
        <taxon>Methanobacteriati</taxon>
        <taxon>Methanobacteriota</taxon>
        <taxon>Methanomada group</taxon>
        <taxon>Methanobacteria</taxon>
        <taxon>Methanobacteriales</taxon>
        <taxon>Methanobacteriaceae</taxon>
        <taxon>Methanothermobacter</taxon>
    </lineage>
</organism>
<accession>Q50786</accession>
<accession>D9PU58</accession>
<feature type="chain" id="PRO_0000139810" description="Nitrogen fixation nifHD region GlnB-like protein 1">
    <location>
        <begin position="1"/>
        <end position="105"/>
    </location>
</feature>
<feature type="sequence conflict" description="In Ref. 1; CAA61217." evidence="2" ref="1">
    <original>E</original>
    <variation>A</variation>
    <location>
        <position position="75"/>
    </location>
</feature>
<name>GLNB1_METTM</name>
<gene>
    <name type="primary">glnBA</name>
    <name type="synonym">nifI1</name>
    <name type="ordered locus">MTBMA_c01470</name>
</gene>
<proteinExistence type="inferred from homology"/>
<dbReference type="EMBL" id="X87971">
    <property type="protein sequence ID" value="CAA61217.1"/>
    <property type="molecule type" value="Genomic_DNA"/>
</dbReference>
<dbReference type="EMBL" id="CP001710">
    <property type="protein sequence ID" value="ADL57756.1"/>
    <property type="molecule type" value="Genomic_DNA"/>
</dbReference>
<dbReference type="RefSeq" id="WP_013294984.1">
    <property type="nucleotide sequence ID" value="NC_014408.1"/>
</dbReference>
<dbReference type="SMR" id="Q50786"/>
<dbReference type="STRING" id="79929.MTBMA_c01470"/>
<dbReference type="PaxDb" id="79929-MTBMA_c01470"/>
<dbReference type="GeneID" id="43708175"/>
<dbReference type="GeneID" id="9703852"/>
<dbReference type="KEGG" id="mmg:MTBMA_c01470"/>
<dbReference type="PATRIC" id="fig|79929.8.peg.143"/>
<dbReference type="HOGENOM" id="CLU_082268_0_1_2"/>
<dbReference type="OrthoDB" id="10960at2157"/>
<dbReference type="Proteomes" id="UP000000345">
    <property type="component" value="Chromosome"/>
</dbReference>
<dbReference type="GO" id="GO:0005829">
    <property type="term" value="C:cytosol"/>
    <property type="evidence" value="ECO:0007669"/>
    <property type="project" value="TreeGrafter"/>
</dbReference>
<dbReference type="GO" id="GO:0005524">
    <property type="term" value="F:ATP binding"/>
    <property type="evidence" value="ECO:0007669"/>
    <property type="project" value="TreeGrafter"/>
</dbReference>
<dbReference type="GO" id="GO:0030234">
    <property type="term" value="F:enzyme regulator activity"/>
    <property type="evidence" value="ECO:0007669"/>
    <property type="project" value="InterPro"/>
</dbReference>
<dbReference type="GO" id="GO:0009399">
    <property type="term" value="P:nitrogen fixation"/>
    <property type="evidence" value="ECO:0007669"/>
    <property type="project" value="UniProtKB-KW"/>
</dbReference>
<dbReference type="GO" id="GO:0006808">
    <property type="term" value="P:regulation of nitrogen utilization"/>
    <property type="evidence" value="ECO:0007669"/>
    <property type="project" value="InterPro"/>
</dbReference>
<dbReference type="Gene3D" id="3.30.70.120">
    <property type="match status" value="1"/>
</dbReference>
<dbReference type="InterPro" id="IPR002187">
    <property type="entry name" value="N-reg_PII"/>
</dbReference>
<dbReference type="InterPro" id="IPR011322">
    <property type="entry name" value="N-reg_PII-like_a/b"/>
</dbReference>
<dbReference type="InterPro" id="IPR015867">
    <property type="entry name" value="N-reg_PII/ATP_PRibTrfase_C"/>
</dbReference>
<dbReference type="InterPro" id="IPR017918">
    <property type="entry name" value="N-reg_PII_CS"/>
</dbReference>
<dbReference type="PANTHER" id="PTHR30115">
    <property type="entry name" value="NITROGEN REGULATORY PROTEIN P-II"/>
    <property type="match status" value="1"/>
</dbReference>
<dbReference type="PANTHER" id="PTHR30115:SF13">
    <property type="entry name" value="PII-LIKE PROTEIN GLNBI"/>
    <property type="match status" value="1"/>
</dbReference>
<dbReference type="Pfam" id="PF00543">
    <property type="entry name" value="P-II"/>
    <property type="match status" value="1"/>
</dbReference>
<dbReference type="PRINTS" id="PR00340">
    <property type="entry name" value="PIIGLNB"/>
</dbReference>
<dbReference type="SMART" id="SM00938">
    <property type="entry name" value="P-II"/>
    <property type="match status" value="1"/>
</dbReference>
<dbReference type="SUPFAM" id="SSF54913">
    <property type="entry name" value="GlnB-like"/>
    <property type="match status" value="1"/>
</dbReference>
<dbReference type="PROSITE" id="PS00638">
    <property type="entry name" value="PII_GLNB_CTER"/>
    <property type="match status" value="1"/>
</dbReference>
<dbReference type="PROSITE" id="PS51343">
    <property type="entry name" value="PII_GLNB_DOM"/>
    <property type="match status" value="1"/>
</dbReference>